<accession>P31018</accession>
<accession>A0A175JVI0</accession>
<accession>C4M7D4</accession>
<accession>S0AWS8</accession>
<feature type="chain" id="PRO_0000090922" description="Elongation factor 1-alpha">
    <location>
        <begin position="1"/>
        <end position="442"/>
    </location>
</feature>
<feature type="domain" description="tr-type G" evidence="2">
    <location>
        <begin position="5"/>
        <end position="228"/>
    </location>
</feature>
<feature type="region of interest" description="G1" evidence="2">
    <location>
        <begin position="14"/>
        <end position="21"/>
    </location>
</feature>
<feature type="region of interest" description="G2" evidence="2">
    <location>
        <begin position="70"/>
        <end position="74"/>
    </location>
</feature>
<feature type="region of interest" description="G3" evidence="2">
    <location>
        <begin position="91"/>
        <end position="94"/>
    </location>
</feature>
<feature type="region of interest" description="G4" evidence="2">
    <location>
        <begin position="153"/>
        <end position="156"/>
    </location>
</feature>
<feature type="region of interest" description="G5" evidence="2">
    <location>
        <begin position="192"/>
        <end position="194"/>
    </location>
</feature>
<feature type="binding site" evidence="1">
    <location>
        <begin position="14"/>
        <end position="21"/>
    </location>
    <ligand>
        <name>GTP</name>
        <dbReference type="ChEBI" id="CHEBI:37565"/>
    </ligand>
</feature>
<feature type="binding site" evidence="1">
    <location>
        <begin position="91"/>
        <end position="95"/>
    </location>
    <ligand>
        <name>GTP</name>
        <dbReference type="ChEBI" id="CHEBI:37565"/>
    </ligand>
</feature>
<feature type="binding site" evidence="1">
    <location>
        <begin position="153"/>
        <end position="156"/>
    </location>
    <ligand>
        <name>GTP</name>
        <dbReference type="ChEBI" id="CHEBI:37565"/>
    </ligand>
</feature>
<feature type="sequence conflict" description="In Ref. 4; CAA58654." evidence="5" ref="4">
    <original>N</original>
    <variation>I</variation>
    <location>
        <position position="62"/>
    </location>
</feature>
<feature type="sequence conflict" description="In Ref. 4; CAA58654." evidence="5" ref="4">
    <original>ADVAILI</original>
    <variation>LMLLFLL</variation>
    <location>
        <begin position="109"/>
        <end position="115"/>
    </location>
</feature>
<organism evidence="9">
    <name type="scientific">Entamoeba histolytica (strain ATCC 30459 / HM-1:IMSS / ABRM)</name>
    <dbReference type="NCBI Taxonomy" id="294381"/>
    <lineage>
        <taxon>Eukaryota</taxon>
        <taxon>Amoebozoa</taxon>
        <taxon>Evosea</taxon>
        <taxon>Archamoebae</taxon>
        <taxon>Mastigamoebida</taxon>
        <taxon>Entamoebidae</taxon>
        <taxon>Entamoeba</taxon>
    </lineage>
</organism>
<evidence type="ECO:0000250" key="1"/>
<evidence type="ECO:0000255" key="2">
    <source>
        <dbReference type="PROSITE-ProRule" id="PRU01059"/>
    </source>
</evidence>
<evidence type="ECO:0000269" key="3">
    <source>
    </source>
</evidence>
<evidence type="ECO:0000303" key="4">
    <source>
    </source>
</evidence>
<evidence type="ECO:0000305" key="5"/>
<evidence type="ECO:0000312" key="6">
    <source>
        <dbReference type="EMBL" id="AAA29096.1"/>
    </source>
</evidence>
<evidence type="ECO:0000312" key="7">
    <source>
        <dbReference type="EMBL" id="BAN39688.1"/>
    </source>
</evidence>
<evidence type="ECO:0000312" key="8">
    <source>
        <dbReference type="EMBL" id="CAA58654.1"/>
    </source>
</evidence>
<evidence type="ECO:0000312" key="9">
    <source>
        <dbReference type="EMBL" id="EAL46483.1"/>
    </source>
</evidence>
<proteinExistence type="evidence at protein level"/>
<comment type="function">
    <text>This protein promotes the GTP-dependent binding of aminoacyl-tRNA to the A-site of ribosomes during protein biosynthesis.</text>
</comment>
<comment type="subcellular location">
    <subcellularLocation>
        <location evidence="3">Cytoplasm</location>
    </subcellularLocation>
</comment>
<comment type="developmental stage">
    <text evidence="3">Expressed in trophozoites (at protein level).</text>
</comment>
<comment type="similarity">
    <text evidence="5">Belongs to the TRAFAC class translation factor GTPase superfamily. Classic translation factor GTPase family. EF-Tu/EF-1A subfamily.</text>
</comment>
<comment type="sequence caution" evidence="5">
    <conflict type="frameshift">
        <sequence resource="EMBL-CDS" id="AAA29096"/>
    </conflict>
</comment>
<gene>
    <name evidence="9" type="ORF">EHI_011210</name>
</gene>
<dbReference type="EMBL" id="M92073">
    <property type="protein sequence ID" value="AAA29096.1"/>
    <property type="status" value="ALT_FRAME"/>
    <property type="molecule type" value="mRNA"/>
</dbReference>
<dbReference type="EMBL" id="AK418735">
    <property type="protein sequence ID" value="BAN37484.1"/>
    <property type="molecule type" value="mRNA"/>
</dbReference>
<dbReference type="EMBL" id="AK418822">
    <property type="protein sequence ID" value="BAN37565.1"/>
    <property type="molecule type" value="mRNA"/>
</dbReference>
<dbReference type="EMBL" id="AK419052">
    <property type="protein sequence ID" value="BAN37771.1"/>
    <property type="molecule type" value="mRNA"/>
</dbReference>
<dbReference type="EMBL" id="AK419055">
    <property type="protein sequence ID" value="BAN37774.1"/>
    <property type="molecule type" value="mRNA"/>
</dbReference>
<dbReference type="EMBL" id="AK419071">
    <property type="protein sequence ID" value="BAN37788.1"/>
    <property type="molecule type" value="mRNA"/>
</dbReference>
<dbReference type="EMBL" id="AK419172">
    <property type="protein sequence ID" value="BAN37876.1"/>
    <property type="molecule type" value="mRNA"/>
</dbReference>
<dbReference type="EMBL" id="AK419257">
    <property type="protein sequence ID" value="BAN37954.1"/>
    <property type="molecule type" value="mRNA"/>
</dbReference>
<dbReference type="EMBL" id="AK419331">
    <property type="protein sequence ID" value="BAN38020.1"/>
    <property type="molecule type" value="mRNA"/>
</dbReference>
<dbReference type="EMBL" id="AK419340">
    <property type="protein sequence ID" value="BAN38029.1"/>
    <property type="molecule type" value="mRNA"/>
</dbReference>
<dbReference type="EMBL" id="AK419382">
    <property type="protein sequence ID" value="BAN38067.1"/>
    <property type="molecule type" value="mRNA"/>
</dbReference>
<dbReference type="EMBL" id="AK419393">
    <property type="protein sequence ID" value="BAN38076.1"/>
    <property type="molecule type" value="mRNA"/>
</dbReference>
<dbReference type="EMBL" id="AK419439">
    <property type="protein sequence ID" value="BAN38118.1"/>
    <property type="molecule type" value="mRNA"/>
</dbReference>
<dbReference type="EMBL" id="AK419509">
    <property type="protein sequence ID" value="BAN38181.1"/>
    <property type="molecule type" value="mRNA"/>
</dbReference>
<dbReference type="EMBL" id="AK419712">
    <property type="protein sequence ID" value="BAN38365.1"/>
    <property type="molecule type" value="mRNA"/>
</dbReference>
<dbReference type="EMBL" id="AK419788">
    <property type="protein sequence ID" value="BAN38436.1"/>
    <property type="molecule type" value="mRNA"/>
</dbReference>
<dbReference type="EMBL" id="AK419950">
    <property type="protein sequence ID" value="BAN38582.1"/>
    <property type="molecule type" value="mRNA"/>
</dbReference>
<dbReference type="EMBL" id="AK420173">
    <property type="protein sequence ID" value="BAN38797.1"/>
    <property type="molecule type" value="mRNA"/>
</dbReference>
<dbReference type="EMBL" id="AK420325">
    <property type="protein sequence ID" value="BAN38940.1"/>
    <property type="molecule type" value="mRNA"/>
</dbReference>
<dbReference type="EMBL" id="AK420560">
    <property type="protein sequence ID" value="BAN39166.1"/>
    <property type="molecule type" value="mRNA"/>
</dbReference>
<dbReference type="EMBL" id="AK420460">
    <property type="protein sequence ID" value="BAN39072.1"/>
    <property type="molecule type" value="mRNA"/>
</dbReference>
<dbReference type="EMBL" id="AK420856">
    <property type="protein sequence ID" value="BAN39443.1"/>
    <property type="molecule type" value="mRNA"/>
</dbReference>
<dbReference type="EMBL" id="AK420895">
    <property type="protein sequence ID" value="BAN39479.1"/>
    <property type="molecule type" value="mRNA"/>
</dbReference>
<dbReference type="EMBL" id="AK420917">
    <property type="protein sequence ID" value="BAN39501.1"/>
    <property type="molecule type" value="mRNA"/>
</dbReference>
<dbReference type="EMBL" id="AK421039">
    <property type="protein sequence ID" value="BAN39613.1"/>
    <property type="molecule type" value="mRNA"/>
</dbReference>
<dbReference type="EMBL" id="AK421052">
    <property type="protein sequence ID" value="BAN39625.1"/>
    <property type="molecule type" value="mRNA"/>
</dbReference>
<dbReference type="EMBL" id="AK421119">
    <property type="protein sequence ID" value="BAN39688.1"/>
    <property type="molecule type" value="mRNA"/>
</dbReference>
<dbReference type="EMBL" id="AK421126">
    <property type="protein sequence ID" value="BAN39694.1"/>
    <property type="molecule type" value="mRNA"/>
</dbReference>
<dbReference type="EMBL" id="AK421131">
    <property type="protein sequence ID" value="BAN39699.1"/>
    <property type="molecule type" value="mRNA"/>
</dbReference>
<dbReference type="EMBL" id="AK421161">
    <property type="protein sequence ID" value="BAN39728.1"/>
    <property type="molecule type" value="mRNA"/>
</dbReference>
<dbReference type="EMBL" id="AK421212">
    <property type="protein sequence ID" value="BAN39775.1"/>
    <property type="molecule type" value="mRNA"/>
</dbReference>
<dbReference type="EMBL" id="AK421378">
    <property type="protein sequence ID" value="BAN39934.1"/>
    <property type="molecule type" value="mRNA"/>
</dbReference>
<dbReference type="EMBL" id="AK421460">
    <property type="protein sequence ID" value="BAN40012.1"/>
    <property type="molecule type" value="mRNA"/>
</dbReference>
<dbReference type="EMBL" id="AK421625">
    <property type="protein sequence ID" value="BAN40157.1"/>
    <property type="molecule type" value="mRNA"/>
</dbReference>
<dbReference type="EMBL" id="AK421637">
    <property type="protein sequence ID" value="BAN40168.1"/>
    <property type="molecule type" value="mRNA"/>
</dbReference>
<dbReference type="EMBL" id="DS571324">
    <property type="protein sequence ID" value="EAL46483.1"/>
    <property type="molecule type" value="Genomic_DNA"/>
</dbReference>
<dbReference type="EMBL" id="X83684">
    <property type="protein sequence ID" value="CAA58654.1"/>
    <property type="molecule type" value="mRNA"/>
</dbReference>
<dbReference type="RefSeq" id="XP_651869.1">
    <property type="nucleotide sequence ID" value="XM_646777.2"/>
</dbReference>
<dbReference type="SMR" id="P31018"/>
<dbReference type="STRING" id="5759.C4M7D4"/>
<dbReference type="EnsemblProtists" id="GAT97438">
    <property type="protein sequence ID" value="GAT97438"/>
    <property type="gene ID" value="CL6EHI_011210"/>
</dbReference>
<dbReference type="EnsemblProtists" id="rna_EHI_011210-1">
    <property type="protein sequence ID" value="rna_EHI_011210-1"/>
    <property type="gene ID" value="EHI_011210"/>
</dbReference>
<dbReference type="GeneID" id="3406182"/>
<dbReference type="KEGG" id="ehi:EHI_011210"/>
<dbReference type="VEuPathDB" id="AmoebaDB:EHI5A_070980"/>
<dbReference type="VEuPathDB" id="AmoebaDB:EHI5A_195540"/>
<dbReference type="VEuPathDB" id="AmoebaDB:EHI7A_030290"/>
<dbReference type="VEuPathDB" id="AmoebaDB:EHI8A_035930"/>
<dbReference type="VEuPathDB" id="AmoebaDB:EHI_011210"/>
<dbReference type="VEuPathDB" id="AmoebaDB:KM1_038160"/>
<dbReference type="eggNOG" id="KOG0052">
    <property type="taxonomic scope" value="Eukaryota"/>
</dbReference>
<dbReference type="HOGENOM" id="CLU_007265_3_5_1"/>
<dbReference type="OMA" id="SPPCYTP"/>
<dbReference type="OrthoDB" id="25063at2759"/>
<dbReference type="Proteomes" id="UP000001926">
    <property type="component" value="Partially assembled WGS sequence"/>
</dbReference>
<dbReference type="GO" id="GO:0005737">
    <property type="term" value="C:cytoplasm"/>
    <property type="evidence" value="ECO:0007669"/>
    <property type="project" value="UniProtKB-SubCell"/>
</dbReference>
<dbReference type="GO" id="GO:0005525">
    <property type="term" value="F:GTP binding"/>
    <property type="evidence" value="ECO:0007669"/>
    <property type="project" value="UniProtKB-KW"/>
</dbReference>
<dbReference type="GO" id="GO:0003924">
    <property type="term" value="F:GTPase activity"/>
    <property type="evidence" value="ECO:0000318"/>
    <property type="project" value="GO_Central"/>
</dbReference>
<dbReference type="GO" id="GO:0003746">
    <property type="term" value="F:translation elongation factor activity"/>
    <property type="evidence" value="ECO:0000318"/>
    <property type="project" value="GO_Central"/>
</dbReference>
<dbReference type="GO" id="GO:0006412">
    <property type="term" value="P:translation"/>
    <property type="evidence" value="ECO:0000318"/>
    <property type="project" value="GO_Central"/>
</dbReference>
<dbReference type="GO" id="GO:0006414">
    <property type="term" value="P:translational elongation"/>
    <property type="evidence" value="ECO:0000318"/>
    <property type="project" value="GO_Central"/>
</dbReference>
<dbReference type="CDD" id="cd01883">
    <property type="entry name" value="EF1_alpha"/>
    <property type="match status" value="1"/>
</dbReference>
<dbReference type="CDD" id="cd03693">
    <property type="entry name" value="EF1_alpha_II"/>
    <property type="match status" value="1"/>
</dbReference>
<dbReference type="CDD" id="cd03705">
    <property type="entry name" value="EF1_alpha_III"/>
    <property type="match status" value="1"/>
</dbReference>
<dbReference type="FunFam" id="2.40.30.10:FF:000003">
    <property type="entry name" value="Elongation factor 1-alpha"/>
    <property type="match status" value="1"/>
</dbReference>
<dbReference type="FunFam" id="2.40.30.10:FF:000005">
    <property type="entry name" value="Elongation factor 1-alpha"/>
    <property type="match status" value="1"/>
</dbReference>
<dbReference type="FunFam" id="3.40.50.300:FF:000211">
    <property type="entry name" value="Elongation factor 1-alpha"/>
    <property type="match status" value="1"/>
</dbReference>
<dbReference type="Gene3D" id="3.40.50.300">
    <property type="entry name" value="P-loop containing nucleotide triphosphate hydrolases"/>
    <property type="match status" value="1"/>
</dbReference>
<dbReference type="Gene3D" id="2.40.30.10">
    <property type="entry name" value="Translation factors"/>
    <property type="match status" value="2"/>
</dbReference>
<dbReference type="HAMAP" id="MF_00118_A">
    <property type="entry name" value="EF_Tu_A"/>
    <property type="match status" value="1"/>
</dbReference>
<dbReference type="InterPro" id="IPR004161">
    <property type="entry name" value="EFTu-like_2"/>
</dbReference>
<dbReference type="InterPro" id="IPR031157">
    <property type="entry name" value="G_TR_CS"/>
</dbReference>
<dbReference type="InterPro" id="IPR054696">
    <property type="entry name" value="GTP-eEF1A_C"/>
</dbReference>
<dbReference type="InterPro" id="IPR027417">
    <property type="entry name" value="P-loop_NTPase"/>
</dbReference>
<dbReference type="InterPro" id="IPR000795">
    <property type="entry name" value="T_Tr_GTP-bd_dom"/>
</dbReference>
<dbReference type="InterPro" id="IPR050100">
    <property type="entry name" value="TRAFAC_GTPase_members"/>
</dbReference>
<dbReference type="InterPro" id="IPR009000">
    <property type="entry name" value="Transl_B-barrel_sf"/>
</dbReference>
<dbReference type="InterPro" id="IPR009001">
    <property type="entry name" value="Transl_elong_EF1A/Init_IF2_C"/>
</dbReference>
<dbReference type="InterPro" id="IPR004539">
    <property type="entry name" value="Transl_elong_EF1A_euk/arc"/>
</dbReference>
<dbReference type="NCBIfam" id="TIGR00483">
    <property type="entry name" value="EF-1_alpha"/>
    <property type="match status" value="1"/>
</dbReference>
<dbReference type="NCBIfam" id="NF008969">
    <property type="entry name" value="PRK12317.1"/>
    <property type="match status" value="1"/>
</dbReference>
<dbReference type="PANTHER" id="PTHR23115">
    <property type="entry name" value="TRANSLATION FACTOR"/>
    <property type="match status" value="1"/>
</dbReference>
<dbReference type="Pfam" id="PF22594">
    <property type="entry name" value="GTP-eEF1A_C"/>
    <property type="match status" value="1"/>
</dbReference>
<dbReference type="Pfam" id="PF00009">
    <property type="entry name" value="GTP_EFTU"/>
    <property type="match status" value="1"/>
</dbReference>
<dbReference type="Pfam" id="PF03144">
    <property type="entry name" value="GTP_EFTU_D2"/>
    <property type="match status" value="1"/>
</dbReference>
<dbReference type="PRINTS" id="PR00315">
    <property type="entry name" value="ELONGATNFCT"/>
</dbReference>
<dbReference type="SUPFAM" id="SSF50465">
    <property type="entry name" value="EF-Tu/eEF-1alpha/eIF2-gamma C-terminal domain"/>
    <property type="match status" value="1"/>
</dbReference>
<dbReference type="SUPFAM" id="SSF52540">
    <property type="entry name" value="P-loop containing nucleoside triphosphate hydrolases"/>
    <property type="match status" value="1"/>
</dbReference>
<dbReference type="SUPFAM" id="SSF50447">
    <property type="entry name" value="Translation proteins"/>
    <property type="match status" value="1"/>
</dbReference>
<dbReference type="PROSITE" id="PS00301">
    <property type="entry name" value="G_TR_1"/>
    <property type="match status" value="1"/>
</dbReference>
<dbReference type="PROSITE" id="PS51722">
    <property type="entry name" value="G_TR_2"/>
    <property type="match status" value="1"/>
</dbReference>
<protein>
    <recommendedName>
        <fullName evidence="4">Elongation factor 1-alpha</fullName>
        <shortName evidence="4">EF-1-alpha</shortName>
    </recommendedName>
</protein>
<reference evidence="6" key="1">
    <citation type="journal article" date="1991" name="Mol. Biochem. Parasitol.">
        <title>Cloning and characterization of an unusual elongation factor-1 alpha cDNA from Entamoeba histolytica.</title>
        <authorList>
            <person name="de Meester F."/>
            <person name="Bracha R."/>
            <person name="Huber M."/>
            <person name="Keren Z."/>
            <person name="Rozenblatt S."/>
            <person name="Mirelman D."/>
        </authorList>
    </citation>
    <scope>NUCLEOTIDE SEQUENCE [MRNA]</scope>
    <scope>SUBCELLULAR LOCATION</scope>
    <scope>DEVELOPMENTAL STAGE</scope>
</reference>
<reference evidence="7" key="2">
    <citation type="submission" date="2012-06" db="EMBL/GenBank/DDBJ databases">
        <title>Short 5' UTR of Entamoeba genes.</title>
        <authorList>
            <person name="Hiranuka K."/>
            <person name="Kumagai M."/>
            <person name="Wakaguri H."/>
            <person name="Suzuki Y."/>
            <person name="Sugano S."/>
            <person name="Watanabe J."/>
            <person name="Makioka A."/>
        </authorList>
    </citation>
    <scope>NUCLEOTIDE SEQUENCE [MRNA]</scope>
    <source>
        <strain evidence="7">ATCC 30459 / HM-1:IMSS / ABRM</strain>
    </source>
</reference>
<reference evidence="9" key="3">
    <citation type="journal article" date="2005" name="Nature">
        <title>The genome of the protist parasite Entamoeba histolytica.</title>
        <authorList>
            <person name="Loftus B.J."/>
            <person name="Anderson I."/>
            <person name="Davies R."/>
            <person name="Alsmark U.C."/>
            <person name="Samuelson J."/>
            <person name="Amedeo P."/>
            <person name="Roncaglia P."/>
            <person name="Berriman M."/>
            <person name="Hirt R.P."/>
            <person name="Mann B.J."/>
            <person name="Nozaki T."/>
            <person name="Suh B."/>
            <person name="Pop M."/>
            <person name="Duchene M."/>
            <person name="Ackers J."/>
            <person name="Tannich E."/>
            <person name="Leippe M."/>
            <person name="Hofer M."/>
            <person name="Bruchhaus I."/>
            <person name="Willhoeft U."/>
            <person name="Bhattacharya A."/>
            <person name="Chillingworth T."/>
            <person name="Churcher C.M."/>
            <person name="Hance Z."/>
            <person name="Harris B."/>
            <person name="Harris D."/>
            <person name="Jagels K."/>
            <person name="Moule S."/>
            <person name="Mungall K.L."/>
            <person name="Ormond D."/>
            <person name="Squares R."/>
            <person name="Whitehead S."/>
            <person name="Quail M.A."/>
            <person name="Rabbinowitsch E."/>
            <person name="Norbertczak H."/>
            <person name="Price C."/>
            <person name="Wang Z."/>
            <person name="Guillen N."/>
            <person name="Gilchrist C."/>
            <person name="Stroup S.E."/>
            <person name="Bhattacharya S."/>
            <person name="Lohia A."/>
            <person name="Foster P.G."/>
            <person name="Sicheritz-Ponten T."/>
            <person name="Weber C."/>
            <person name="Singh U."/>
            <person name="Mukherjee C."/>
            <person name="El-Sayed N.M.A."/>
            <person name="Petri W.A."/>
            <person name="Clark C.G."/>
            <person name="Embley T.M."/>
            <person name="Barrell B.G."/>
            <person name="Fraser C.M."/>
            <person name="Hall N."/>
        </authorList>
    </citation>
    <scope>NUCLEOTIDE SEQUENCE [LARGE SCALE GENOMIC DNA]</scope>
    <source>
        <strain evidence="9">ATCC 30459 / HM-1:IMSS / ABRM</strain>
    </source>
</reference>
<reference evidence="8" key="4">
    <citation type="submission" date="1995-01" db="EMBL/GenBank/DDBJ databases">
        <authorList>
            <person name="Bhattacharya A."/>
        </authorList>
    </citation>
    <scope>NUCLEOTIDE SEQUENCE [MRNA] OF 13-143</scope>
    <source>
        <strain evidence="8">ATCC 30459 / HM-1:IMSS / ABRM</strain>
    </source>
</reference>
<keyword id="KW-0963">Cytoplasm</keyword>
<keyword id="KW-0251">Elongation factor</keyword>
<keyword id="KW-0342">GTP-binding</keyword>
<keyword id="KW-0547">Nucleotide-binding</keyword>
<keyword id="KW-0648">Protein biosynthesis</keyword>
<keyword id="KW-1185">Reference proteome</keyword>
<sequence length="442" mass="48418">MPKEKTHINIVVIGHVDSGKSTTTGHLIYKCGGIDQRTIEKFEKESAEMGKGSFKYAWVLDNLKAERERGITIDISLWKFETSKYYFTIIDAPGHRDFIKNMITGTSQADVAILIVAAGTGEFEAGISKNGQTREHILLSYTLGVKQMIVGVNKMDAIQYKQERYEEIKKEISAFLKKTGYNPDKIPFVPISGFQGDNMIEPSTNMPWYKGPTLIGALDSVTPPERPVDKPLRLPLQDVYKISGIGTVPVGRVETGILKPGTIVQFAPSGVSSECKSIEMHHTALAQAIPGDNVGFNVRNLTVKDIKRGNVASDAKNQPAVGCEDFTAQVIVMNHPGQIRKGYTPVLDCHTSHIACKFEELLSKIDRRTGKSMEGGEPEYIKNGDSALVKIVPTKPLCVEEFAKFPPLGRFAVRDMKQTVAVGVVKAVTPRAANASAAGKKK</sequence>
<name>EF1A_ENTH1</name>